<keyword id="KW-0025">Alternative splicing</keyword>
<keyword id="KW-1267">Proteomics identification</keyword>
<keyword id="KW-1185">Reference proteome</keyword>
<dbReference type="EMBL" id="AK300338">
    <property type="protein sequence ID" value="BAG62083.1"/>
    <property type="molecule type" value="mRNA"/>
</dbReference>
<dbReference type="EMBL" id="AC005099">
    <property type="status" value="NOT_ANNOTATED_CDS"/>
    <property type="molecule type" value="Genomic_DNA"/>
</dbReference>
<dbReference type="EMBL" id="AC007030">
    <property type="status" value="NOT_ANNOTATED_CDS"/>
    <property type="molecule type" value="Genomic_DNA"/>
</dbReference>
<dbReference type="EMBL" id="AC073073">
    <property type="status" value="NOT_ANNOTATED_CDS"/>
    <property type="molecule type" value="Genomic_DNA"/>
</dbReference>
<dbReference type="EMBL" id="CH236947">
    <property type="protein sequence ID" value="EAL24404.1"/>
    <property type="molecule type" value="Genomic_DNA"/>
</dbReference>
<dbReference type="EMBL" id="CH471070">
    <property type="protein sequence ID" value="EAW83370.1"/>
    <property type="molecule type" value="Genomic_DNA"/>
</dbReference>
<dbReference type="EMBL" id="BC030616">
    <property type="protein sequence ID" value="AAH30616.1"/>
    <property type="molecule type" value="mRNA"/>
</dbReference>
<dbReference type="EMBL" id="AB033044">
    <property type="protein sequence ID" value="BAA86532.1"/>
    <property type="status" value="ALT_SEQ"/>
    <property type="molecule type" value="mRNA"/>
</dbReference>
<dbReference type="CCDS" id="CCDS34727.1">
    <molecule id="Q9ULK2-2"/>
</dbReference>
<dbReference type="CCDS" id="CCDS47682.1">
    <molecule id="Q9ULK2-1"/>
</dbReference>
<dbReference type="CCDS" id="CCDS47683.1">
    <molecule id="Q9ULK2-3"/>
</dbReference>
<dbReference type="RefSeq" id="NP_065776.1">
    <molecule id="Q9ULK2-1"/>
    <property type="nucleotide sequence ID" value="NM_020725.2"/>
</dbReference>
<dbReference type="RefSeq" id="NP_612504.1">
    <molecule id="Q9ULK2-3"/>
    <property type="nucleotide sequence ID" value="NM_138495.2"/>
</dbReference>
<dbReference type="RefSeq" id="NP_689962.1">
    <molecule id="Q9ULK2-2"/>
    <property type="nucleotide sequence ID" value="NM_152749.3"/>
</dbReference>
<dbReference type="RefSeq" id="XP_011514242.1">
    <property type="nucleotide sequence ID" value="XM_011515940.1"/>
</dbReference>
<dbReference type="RefSeq" id="XP_011514256.1">
    <property type="nucleotide sequence ID" value="XM_011515954.2"/>
</dbReference>
<dbReference type="SMR" id="Q9ULK2"/>
<dbReference type="BioGRID" id="128794">
    <property type="interactions" value="83"/>
</dbReference>
<dbReference type="CORUM" id="Q9ULK2"/>
<dbReference type="FunCoup" id="Q9ULK2">
    <property type="interactions" value="1146"/>
</dbReference>
<dbReference type="IntAct" id="Q9ULK2">
    <property type="interactions" value="72"/>
</dbReference>
<dbReference type="MINT" id="Q9ULK2"/>
<dbReference type="STRING" id="9606.ENSP00000410759"/>
<dbReference type="GlyCosmos" id="Q9ULK2">
    <property type="glycosylation" value="1 site, 2 glycans"/>
</dbReference>
<dbReference type="GlyGen" id="Q9ULK2">
    <property type="glycosylation" value="1 site, 2 O-linked glycans (1 site)"/>
</dbReference>
<dbReference type="iPTMnet" id="Q9ULK2"/>
<dbReference type="PhosphoSitePlus" id="Q9ULK2"/>
<dbReference type="BioMuta" id="ATXN7L1"/>
<dbReference type="DMDM" id="334302929"/>
<dbReference type="jPOST" id="Q9ULK2"/>
<dbReference type="MassIVE" id="Q9ULK2"/>
<dbReference type="PaxDb" id="9606-ENSP00000410759"/>
<dbReference type="PeptideAtlas" id="Q9ULK2"/>
<dbReference type="ProteomicsDB" id="85054">
    <molecule id="Q9ULK2-1"/>
</dbReference>
<dbReference type="ProteomicsDB" id="85055">
    <molecule id="Q9ULK2-2"/>
</dbReference>
<dbReference type="ProteomicsDB" id="85056">
    <molecule id="Q9ULK2-3"/>
</dbReference>
<dbReference type="Antibodypedia" id="17103">
    <property type="antibodies" value="233 antibodies from 23 providers"/>
</dbReference>
<dbReference type="DNASU" id="222255"/>
<dbReference type="Ensembl" id="ENST00000318724.8">
    <molecule id="Q9ULK2-2"/>
    <property type="protein sequence ID" value="ENSP00000326344.4"/>
    <property type="gene ID" value="ENSG00000146776.15"/>
</dbReference>
<dbReference type="Ensembl" id="ENST00000419735.8">
    <molecule id="Q9ULK2-1"/>
    <property type="protein sequence ID" value="ENSP00000410759.3"/>
    <property type="gene ID" value="ENSG00000146776.15"/>
</dbReference>
<dbReference type="Ensembl" id="ENST00000477775.5">
    <molecule id="Q9ULK2-3"/>
    <property type="protein sequence ID" value="ENSP00000418476.1"/>
    <property type="gene ID" value="ENSG00000146776.15"/>
</dbReference>
<dbReference type="GeneID" id="222255"/>
<dbReference type="KEGG" id="hsa:222255"/>
<dbReference type="MANE-Select" id="ENST00000419735.8">
    <property type="protein sequence ID" value="ENSP00000410759.3"/>
    <property type="RefSeq nucleotide sequence ID" value="NM_020725.2"/>
    <property type="RefSeq protein sequence ID" value="NP_065776.1"/>
</dbReference>
<dbReference type="UCSC" id="uc003vde.3">
    <molecule id="Q9ULK2-1"/>
    <property type="organism name" value="human"/>
</dbReference>
<dbReference type="AGR" id="HGNC:22210"/>
<dbReference type="CTD" id="222255"/>
<dbReference type="DisGeNET" id="222255"/>
<dbReference type="GeneCards" id="ATXN7L1"/>
<dbReference type="HGNC" id="HGNC:22210">
    <property type="gene designation" value="ATXN7L1"/>
</dbReference>
<dbReference type="HPA" id="ENSG00000146776">
    <property type="expression patterns" value="Low tissue specificity"/>
</dbReference>
<dbReference type="neXtProt" id="NX_Q9ULK2"/>
<dbReference type="OpenTargets" id="ENSG00000146776"/>
<dbReference type="PharmGKB" id="PA134884892"/>
<dbReference type="VEuPathDB" id="HostDB:ENSG00000146776"/>
<dbReference type="eggNOG" id="KOG4140">
    <property type="taxonomic scope" value="Eukaryota"/>
</dbReference>
<dbReference type="GeneTree" id="ENSGT00940000158612"/>
<dbReference type="HOGENOM" id="CLU_014451_1_0_1"/>
<dbReference type="InParanoid" id="Q9ULK2"/>
<dbReference type="OMA" id="NNAISRT"/>
<dbReference type="OrthoDB" id="21678at2759"/>
<dbReference type="PAN-GO" id="Q9ULK2">
    <property type="GO annotations" value="0 GO annotations based on evolutionary models"/>
</dbReference>
<dbReference type="PhylomeDB" id="Q9ULK2"/>
<dbReference type="TreeFam" id="TF331337"/>
<dbReference type="PathwayCommons" id="Q9ULK2"/>
<dbReference type="SignaLink" id="Q9ULK2"/>
<dbReference type="BioGRID-ORCS" id="222255">
    <property type="hits" value="21 hits in 1149 CRISPR screens"/>
</dbReference>
<dbReference type="ChiTaRS" id="ATXN7L1">
    <property type="organism name" value="human"/>
</dbReference>
<dbReference type="GenomeRNAi" id="222255"/>
<dbReference type="Pharos" id="Q9ULK2">
    <property type="development level" value="Tdark"/>
</dbReference>
<dbReference type="PRO" id="PR:Q9ULK2"/>
<dbReference type="Proteomes" id="UP000005640">
    <property type="component" value="Chromosome 7"/>
</dbReference>
<dbReference type="RNAct" id="Q9ULK2">
    <property type="molecule type" value="protein"/>
</dbReference>
<dbReference type="Bgee" id="ENSG00000146776">
    <property type="expression patterns" value="Expressed in right lobe of liver and 154 other cell types or tissues"/>
</dbReference>
<dbReference type="ExpressionAtlas" id="Q9ULK2">
    <property type="expression patterns" value="baseline and differential"/>
</dbReference>
<dbReference type="Gene3D" id="6.10.140.670">
    <property type="match status" value="1"/>
</dbReference>
<dbReference type="InterPro" id="IPR052237">
    <property type="entry name" value="Ataxin-7-like_regulator"/>
</dbReference>
<dbReference type="InterPro" id="IPR013243">
    <property type="entry name" value="SCA7_dom"/>
</dbReference>
<dbReference type="PANTHER" id="PTHR15117">
    <property type="entry name" value="ATAXIN 7 RELATED"/>
    <property type="match status" value="1"/>
</dbReference>
<dbReference type="PANTHER" id="PTHR15117:SF9">
    <property type="entry name" value="ATAXIN-7-LIKE PROTEIN 1"/>
    <property type="match status" value="1"/>
</dbReference>
<dbReference type="Pfam" id="PF08313">
    <property type="entry name" value="SCA7"/>
    <property type="match status" value="1"/>
</dbReference>
<dbReference type="PROSITE" id="PS51505">
    <property type="entry name" value="SCA7"/>
    <property type="match status" value="1"/>
</dbReference>
<evidence type="ECO:0000255" key="1">
    <source>
        <dbReference type="PROSITE-ProRule" id="PRU00838"/>
    </source>
</evidence>
<evidence type="ECO:0000256" key="2">
    <source>
        <dbReference type="SAM" id="MobiDB-lite"/>
    </source>
</evidence>
<evidence type="ECO:0000303" key="3">
    <source>
    </source>
</evidence>
<evidence type="ECO:0000303" key="4">
    <source>
    </source>
</evidence>
<evidence type="ECO:0000305" key="5"/>
<accession>Q9ULK2</accession>
<accession>A4D0Q2</accession>
<accession>B4DTS1</accession>
<accession>Q8N2T0</accession>
<feature type="chain" id="PRO_0000064718" description="Ataxin-7-like protein 1">
    <location>
        <begin position="1"/>
        <end position="861"/>
    </location>
</feature>
<feature type="domain" description="SCA7" evidence="1">
    <location>
        <begin position="284"/>
        <end position="351"/>
    </location>
</feature>
<feature type="region of interest" description="Disordered" evidence="2">
    <location>
        <begin position="1"/>
        <end position="31"/>
    </location>
</feature>
<feature type="region of interest" description="Disordered" evidence="2">
    <location>
        <begin position="154"/>
        <end position="189"/>
    </location>
</feature>
<feature type="region of interest" description="Disordered" evidence="2">
    <location>
        <begin position="342"/>
        <end position="448"/>
    </location>
</feature>
<feature type="region of interest" description="Disordered" evidence="2">
    <location>
        <begin position="606"/>
        <end position="673"/>
    </location>
</feature>
<feature type="region of interest" description="Disordered" evidence="2">
    <location>
        <begin position="772"/>
        <end position="861"/>
    </location>
</feature>
<feature type="compositionally biased region" description="Basic and acidic residues" evidence="2">
    <location>
        <begin position="342"/>
        <end position="354"/>
    </location>
</feature>
<feature type="compositionally biased region" description="Polar residues" evidence="2">
    <location>
        <begin position="355"/>
        <end position="369"/>
    </location>
</feature>
<feature type="compositionally biased region" description="Low complexity" evidence="2">
    <location>
        <begin position="372"/>
        <end position="381"/>
    </location>
</feature>
<feature type="compositionally biased region" description="Low complexity" evidence="2">
    <location>
        <begin position="403"/>
        <end position="417"/>
    </location>
</feature>
<feature type="compositionally biased region" description="Low complexity" evidence="2">
    <location>
        <begin position="606"/>
        <end position="616"/>
    </location>
</feature>
<feature type="compositionally biased region" description="Basic residues" evidence="2">
    <location>
        <begin position="617"/>
        <end position="627"/>
    </location>
</feature>
<feature type="compositionally biased region" description="Basic and acidic residues" evidence="2">
    <location>
        <begin position="628"/>
        <end position="641"/>
    </location>
</feature>
<feature type="compositionally biased region" description="Low complexity" evidence="2">
    <location>
        <begin position="648"/>
        <end position="671"/>
    </location>
</feature>
<feature type="compositionally biased region" description="Low complexity" evidence="2">
    <location>
        <begin position="783"/>
        <end position="794"/>
    </location>
</feature>
<feature type="compositionally biased region" description="Polar residues" evidence="2">
    <location>
        <begin position="817"/>
        <end position="828"/>
    </location>
</feature>
<feature type="compositionally biased region" description="Low complexity" evidence="2">
    <location>
        <begin position="829"/>
        <end position="847"/>
    </location>
</feature>
<feature type="splice variant" id="VSP_041344" description="In isoform 3." evidence="3">
    <location>
        <begin position="1"/>
        <end position="124"/>
    </location>
</feature>
<feature type="splice variant" id="VSP_032351" description="In isoform 2." evidence="4">
    <original>ERRHGSMCRPSPSPVSPASNPRTSLVQV</original>
    <variation>GRKQDNRRNEGISRSGPESSQAIEKHQV</variation>
    <location>
        <begin position="119"/>
        <end position="146"/>
    </location>
</feature>
<feature type="splice variant" id="VSP_032352" description="In isoform 2." evidence="4">
    <location>
        <begin position="147"/>
        <end position="861"/>
    </location>
</feature>
<feature type="splice variant" id="VSP_041345" description="In isoform 3." evidence="3">
    <original>Q</original>
    <variation>QK</variation>
    <location>
        <position position="849"/>
    </location>
</feature>
<sequence length="861" mass="91514">MTSERSRIPCLSAAAAEGTGKKQQEGRAMATLDRKVPSPEAFLGKPWSSWIDAAKLHCSDNVDLEEAGKEGGKSREVMRLNKEDMHLFGHYPAHDDFYLVVCSACNQVVKPQVFQSHCERRHGSMCRPSPSPVSPASNPRTSLVQVKTKACLSGHHSASSTSKPFKTPKDNLLTSSSKQHTVFPAKGSRDKPCVPVPVVSLEKIPNLVKADGANVKMNSTTTTAVSASSTSSSAVSTPPLIKPVLMSKSVPPSPEKILNGKGILPTTIDKKHQNGTKNSNKPYRRLSEREFDPNKHCGVLDPETKKPCTRSLTCKTHSLSHRRAVPGRKKQFDLLLAEHKAKSREKEVKDKEHLLTSTREILPSQSGPAQDSLLGSSGSSGPEPKVASPAKSRPPNSVLPRPSSANSISSSTSSNHSGHTPEPPLPPVGGDLASRLSSDEGEMDGADESEKLDCQFSTHHPRPLAFCSFGSRLMGRGYYVFDRRWDRFRFALNSMVEKHLNSQMWKKIPPAADSPLPSPAAHITTPVPASVLQPFSNPSAVYLPSAPISSRLTSSYIMTSAMLSNAAFVTSPDPSALMSHTTAFPHVAATLSIMDSTFKAPSAVSPIPAVIPSPSHKPSKTKTSKSSKVKDLSTRSDESPSNKKRKPQSSTSSSSSSSSSSLQTSLSSPLSGPHKKNCVLNASSALNSYQAAPPYNSLSVHNSNNGVSPLSAKLEPSGRTSLPGGPADIVRQVGAVGGSSDSCPLSVPSLALHAGDLSLASHNAVSSLPLSFDKSEGKKRKNSSSSSKACKITKMPGMNSVHKKNPPSLLAPVPDPVNSTSSRQVGKNSSLALSQSSPSSISSPGHSRQNTNRTGRIRTLP</sequence>
<reference key="1">
    <citation type="journal article" date="2004" name="Nat. Genet.">
        <title>Complete sequencing and characterization of 21,243 full-length human cDNAs.</title>
        <authorList>
            <person name="Ota T."/>
            <person name="Suzuki Y."/>
            <person name="Nishikawa T."/>
            <person name="Otsuki T."/>
            <person name="Sugiyama T."/>
            <person name="Irie R."/>
            <person name="Wakamatsu A."/>
            <person name="Hayashi K."/>
            <person name="Sato H."/>
            <person name="Nagai K."/>
            <person name="Kimura K."/>
            <person name="Makita H."/>
            <person name="Sekine M."/>
            <person name="Obayashi M."/>
            <person name="Nishi T."/>
            <person name="Shibahara T."/>
            <person name="Tanaka T."/>
            <person name="Ishii S."/>
            <person name="Yamamoto J."/>
            <person name="Saito K."/>
            <person name="Kawai Y."/>
            <person name="Isono Y."/>
            <person name="Nakamura Y."/>
            <person name="Nagahari K."/>
            <person name="Murakami K."/>
            <person name="Yasuda T."/>
            <person name="Iwayanagi T."/>
            <person name="Wagatsuma M."/>
            <person name="Shiratori A."/>
            <person name="Sudo H."/>
            <person name="Hosoiri T."/>
            <person name="Kaku Y."/>
            <person name="Kodaira H."/>
            <person name="Kondo H."/>
            <person name="Sugawara M."/>
            <person name="Takahashi M."/>
            <person name="Kanda K."/>
            <person name="Yokoi T."/>
            <person name="Furuya T."/>
            <person name="Kikkawa E."/>
            <person name="Omura Y."/>
            <person name="Abe K."/>
            <person name="Kamihara K."/>
            <person name="Katsuta N."/>
            <person name="Sato K."/>
            <person name="Tanikawa M."/>
            <person name="Yamazaki M."/>
            <person name="Ninomiya K."/>
            <person name="Ishibashi T."/>
            <person name="Yamashita H."/>
            <person name="Murakawa K."/>
            <person name="Fujimori K."/>
            <person name="Tanai H."/>
            <person name="Kimata M."/>
            <person name="Watanabe M."/>
            <person name="Hiraoka S."/>
            <person name="Chiba Y."/>
            <person name="Ishida S."/>
            <person name="Ono Y."/>
            <person name="Takiguchi S."/>
            <person name="Watanabe S."/>
            <person name="Yosida M."/>
            <person name="Hotuta T."/>
            <person name="Kusano J."/>
            <person name="Kanehori K."/>
            <person name="Takahashi-Fujii A."/>
            <person name="Hara H."/>
            <person name="Tanase T.-O."/>
            <person name="Nomura Y."/>
            <person name="Togiya S."/>
            <person name="Komai F."/>
            <person name="Hara R."/>
            <person name="Takeuchi K."/>
            <person name="Arita M."/>
            <person name="Imose N."/>
            <person name="Musashino K."/>
            <person name="Yuuki H."/>
            <person name="Oshima A."/>
            <person name="Sasaki N."/>
            <person name="Aotsuka S."/>
            <person name="Yoshikawa Y."/>
            <person name="Matsunawa H."/>
            <person name="Ichihara T."/>
            <person name="Shiohata N."/>
            <person name="Sano S."/>
            <person name="Moriya S."/>
            <person name="Momiyama H."/>
            <person name="Satoh N."/>
            <person name="Takami S."/>
            <person name="Terashima Y."/>
            <person name="Suzuki O."/>
            <person name="Nakagawa S."/>
            <person name="Senoh A."/>
            <person name="Mizoguchi H."/>
            <person name="Goto Y."/>
            <person name="Shimizu F."/>
            <person name="Wakebe H."/>
            <person name="Hishigaki H."/>
            <person name="Watanabe T."/>
            <person name="Sugiyama A."/>
            <person name="Takemoto M."/>
            <person name="Kawakami B."/>
            <person name="Yamazaki M."/>
            <person name="Watanabe K."/>
            <person name="Kumagai A."/>
            <person name="Itakura S."/>
            <person name="Fukuzumi Y."/>
            <person name="Fujimori Y."/>
            <person name="Komiyama M."/>
            <person name="Tashiro H."/>
            <person name="Tanigami A."/>
            <person name="Fujiwara T."/>
            <person name="Ono T."/>
            <person name="Yamada K."/>
            <person name="Fujii Y."/>
            <person name="Ozaki K."/>
            <person name="Hirao M."/>
            <person name="Ohmori Y."/>
            <person name="Kawabata A."/>
            <person name="Hikiji T."/>
            <person name="Kobatake N."/>
            <person name="Inagaki H."/>
            <person name="Ikema Y."/>
            <person name="Okamoto S."/>
            <person name="Okitani R."/>
            <person name="Kawakami T."/>
            <person name="Noguchi S."/>
            <person name="Itoh T."/>
            <person name="Shigeta K."/>
            <person name="Senba T."/>
            <person name="Matsumura K."/>
            <person name="Nakajima Y."/>
            <person name="Mizuno T."/>
            <person name="Morinaga M."/>
            <person name="Sasaki M."/>
            <person name="Togashi T."/>
            <person name="Oyama M."/>
            <person name="Hata H."/>
            <person name="Watanabe M."/>
            <person name="Komatsu T."/>
            <person name="Mizushima-Sugano J."/>
            <person name="Satoh T."/>
            <person name="Shirai Y."/>
            <person name="Takahashi Y."/>
            <person name="Nakagawa K."/>
            <person name="Okumura K."/>
            <person name="Nagase T."/>
            <person name="Nomura N."/>
            <person name="Kikuchi H."/>
            <person name="Masuho Y."/>
            <person name="Yamashita R."/>
            <person name="Nakai K."/>
            <person name="Yada T."/>
            <person name="Nakamura Y."/>
            <person name="Ohara O."/>
            <person name="Isogai T."/>
            <person name="Sugano S."/>
        </authorList>
    </citation>
    <scope>NUCLEOTIDE SEQUENCE [LARGE SCALE MRNA] (ISOFORM 3)</scope>
    <source>
        <tissue>Placenta</tissue>
    </source>
</reference>
<reference key="2">
    <citation type="journal article" date="2003" name="Nature">
        <title>The DNA sequence of human chromosome 7.</title>
        <authorList>
            <person name="Hillier L.W."/>
            <person name="Fulton R.S."/>
            <person name="Fulton L.A."/>
            <person name="Graves T.A."/>
            <person name="Pepin K.H."/>
            <person name="Wagner-McPherson C."/>
            <person name="Layman D."/>
            <person name="Maas J."/>
            <person name="Jaeger S."/>
            <person name="Walker R."/>
            <person name="Wylie K."/>
            <person name="Sekhon M."/>
            <person name="Becker M.C."/>
            <person name="O'Laughlin M.D."/>
            <person name="Schaller M.E."/>
            <person name="Fewell G.A."/>
            <person name="Delehaunty K.D."/>
            <person name="Miner T.L."/>
            <person name="Nash W.E."/>
            <person name="Cordes M."/>
            <person name="Du H."/>
            <person name="Sun H."/>
            <person name="Edwards J."/>
            <person name="Bradshaw-Cordum H."/>
            <person name="Ali J."/>
            <person name="Andrews S."/>
            <person name="Isak A."/>
            <person name="Vanbrunt A."/>
            <person name="Nguyen C."/>
            <person name="Du F."/>
            <person name="Lamar B."/>
            <person name="Courtney L."/>
            <person name="Kalicki J."/>
            <person name="Ozersky P."/>
            <person name="Bielicki L."/>
            <person name="Scott K."/>
            <person name="Holmes A."/>
            <person name="Harkins R."/>
            <person name="Harris A."/>
            <person name="Strong C.M."/>
            <person name="Hou S."/>
            <person name="Tomlinson C."/>
            <person name="Dauphin-Kohlberg S."/>
            <person name="Kozlowicz-Reilly A."/>
            <person name="Leonard S."/>
            <person name="Rohlfing T."/>
            <person name="Rock S.M."/>
            <person name="Tin-Wollam A.-M."/>
            <person name="Abbott A."/>
            <person name="Minx P."/>
            <person name="Maupin R."/>
            <person name="Strowmatt C."/>
            <person name="Latreille P."/>
            <person name="Miller N."/>
            <person name="Johnson D."/>
            <person name="Murray J."/>
            <person name="Woessner J.P."/>
            <person name="Wendl M.C."/>
            <person name="Yang S.-P."/>
            <person name="Schultz B.R."/>
            <person name="Wallis J.W."/>
            <person name="Spieth J."/>
            <person name="Bieri T.A."/>
            <person name="Nelson J.O."/>
            <person name="Berkowicz N."/>
            <person name="Wohldmann P.E."/>
            <person name="Cook L.L."/>
            <person name="Hickenbotham M.T."/>
            <person name="Eldred J."/>
            <person name="Williams D."/>
            <person name="Bedell J.A."/>
            <person name="Mardis E.R."/>
            <person name="Clifton S.W."/>
            <person name="Chissoe S.L."/>
            <person name="Marra M.A."/>
            <person name="Raymond C."/>
            <person name="Haugen E."/>
            <person name="Gillett W."/>
            <person name="Zhou Y."/>
            <person name="James R."/>
            <person name="Phelps K."/>
            <person name="Iadanoto S."/>
            <person name="Bubb K."/>
            <person name="Simms E."/>
            <person name="Levy R."/>
            <person name="Clendenning J."/>
            <person name="Kaul R."/>
            <person name="Kent W.J."/>
            <person name="Furey T.S."/>
            <person name="Baertsch R.A."/>
            <person name="Brent M.R."/>
            <person name="Keibler E."/>
            <person name="Flicek P."/>
            <person name="Bork P."/>
            <person name="Suyama M."/>
            <person name="Bailey J.A."/>
            <person name="Portnoy M.E."/>
            <person name="Torrents D."/>
            <person name="Chinwalla A.T."/>
            <person name="Gish W.R."/>
            <person name="Eddy S.R."/>
            <person name="McPherson J.D."/>
            <person name="Olson M.V."/>
            <person name="Eichler E.E."/>
            <person name="Green E.D."/>
            <person name="Waterston R.H."/>
            <person name="Wilson R.K."/>
        </authorList>
    </citation>
    <scope>NUCLEOTIDE SEQUENCE [LARGE SCALE GENOMIC DNA]</scope>
</reference>
<reference key="3">
    <citation type="journal article" date="2004" name="Genome Res.">
        <title>The status, quality, and expansion of the NIH full-length cDNA project: the Mammalian Gene Collection (MGC).</title>
        <authorList>
            <consortium name="The MGC Project Team"/>
        </authorList>
    </citation>
    <scope>NUCLEOTIDE SEQUENCE [LARGE SCALE MRNA] (ISOFORM 2)</scope>
    <source>
        <tissue>Brain</tissue>
    </source>
</reference>
<reference key="4">
    <citation type="journal article" date="2003" name="Science">
        <title>Human chromosome 7: DNA sequence and biology.</title>
        <authorList>
            <person name="Scherer S.W."/>
            <person name="Cheung J."/>
            <person name="MacDonald J.R."/>
            <person name="Osborne L.R."/>
            <person name="Nakabayashi K."/>
            <person name="Herbrick J.-A."/>
            <person name="Carson A.R."/>
            <person name="Parker-Katiraee L."/>
            <person name="Skaug J."/>
            <person name="Khaja R."/>
            <person name="Zhang J."/>
            <person name="Hudek A.K."/>
            <person name="Li M."/>
            <person name="Haddad M."/>
            <person name="Duggan G.E."/>
            <person name="Fernandez B.A."/>
            <person name="Kanematsu E."/>
            <person name="Gentles S."/>
            <person name="Christopoulos C.C."/>
            <person name="Choufani S."/>
            <person name="Kwasnicka D."/>
            <person name="Zheng X.H."/>
            <person name="Lai Z."/>
            <person name="Nusskern D.R."/>
            <person name="Zhang Q."/>
            <person name="Gu Z."/>
            <person name="Lu F."/>
            <person name="Zeesman S."/>
            <person name="Nowaczyk M.J."/>
            <person name="Teshima I."/>
            <person name="Chitayat D."/>
            <person name="Shuman C."/>
            <person name="Weksberg R."/>
            <person name="Zackai E.H."/>
            <person name="Grebe T.A."/>
            <person name="Cox S.R."/>
            <person name="Kirkpatrick S.J."/>
            <person name="Rahman N."/>
            <person name="Friedman J.M."/>
            <person name="Heng H.H.Q."/>
            <person name="Pelicci P.G."/>
            <person name="Lo-Coco F."/>
            <person name="Belloni E."/>
            <person name="Shaffer L.G."/>
            <person name="Pober B."/>
            <person name="Morton C.C."/>
            <person name="Gusella J.F."/>
            <person name="Bruns G.A.P."/>
            <person name="Korf B.R."/>
            <person name="Quade B.J."/>
            <person name="Ligon A.H."/>
            <person name="Ferguson H."/>
            <person name="Higgins A.W."/>
            <person name="Leach N.T."/>
            <person name="Herrick S.R."/>
            <person name="Lemyre E."/>
            <person name="Farra C.G."/>
            <person name="Kim H.-G."/>
            <person name="Summers A.M."/>
            <person name="Gripp K.W."/>
            <person name="Roberts W."/>
            <person name="Szatmari P."/>
            <person name="Winsor E.J.T."/>
            <person name="Grzeschik K.-H."/>
            <person name="Teebi A."/>
            <person name="Minassian B.A."/>
            <person name="Kere J."/>
            <person name="Armengol L."/>
            <person name="Pujana M.A."/>
            <person name="Estivill X."/>
            <person name="Wilson M.D."/>
            <person name="Koop B.F."/>
            <person name="Tosi S."/>
            <person name="Moore G.E."/>
            <person name="Boright A.P."/>
            <person name="Zlotorynski E."/>
            <person name="Kerem B."/>
            <person name="Kroisel P.M."/>
            <person name="Petek E."/>
            <person name="Oscier D.G."/>
            <person name="Mould S.J."/>
            <person name="Doehner H."/>
            <person name="Doehner K."/>
            <person name="Rommens J.M."/>
            <person name="Vincent J.B."/>
            <person name="Venter J.C."/>
            <person name="Li P.W."/>
            <person name="Mural R.J."/>
            <person name="Adams M.D."/>
            <person name="Tsui L.-C."/>
        </authorList>
    </citation>
    <scope>NUCLEOTIDE SEQUENCE [LARGE SCALE GENOMIC DNA]</scope>
</reference>
<reference key="5">
    <citation type="submission" date="2005-07" db="EMBL/GenBank/DDBJ databases">
        <authorList>
            <person name="Mural R.J."/>
            <person name="Istrail S."/>
            <person name="Sutton G."/>
            <person name="Florea L."/>
            <person name="Halpern A.L."/>
            <person name="Mobarry C.M."/>
            <person name="Lippert R."/>
            <person name="Walenz B."/>
            <person name="Shatkay H."/>
            <person name="Dew I."/>
            <person name="Miller J.R."/>
            <person name="Flanigan M.J."/>
            <person name="Edwards N.J."/>
            <person name="Bolanos R."/>
            <person name="Fasulo D."/>
            <person name="Halldorsson B.V."/>
            <person name="Hannenhalli S."/>
            <person name="Turner R."/>
            <person name="Yooseph S."/>
            <person name="Lu F."/>
            <person name="Nusskern D.R."/>
            <person name="Shue B.C."/>
            <person name="Zheng X.H."/>
            <person name="Zhong F."/>
            <person name="Delcher A.L."/>
            <person name="Huson D.H."/>
            <person name="Kravitz S.A."/>
            <person name="Mouchard L."/>
            <person name="Reinert K."/>
            <person name="Remington K.A."/>
            <person name="Clark A.G."/>
            <person name="Waterman M.S."/>
            <person name="Eichler E.E."/>
            <person name="Adams M.D."/>
            <person name="Hunkapiller M.W."/>
            <person name="Myers E.W."/>
            <person name="Venter J.C."/>
        </authorList>
    </citation>
    <scope>NUCLEOTIDE SEQUENCE [LARGE SCALE GENOMIC DNA]</scope>
</reference>
<reference key="6">
    <citation type="journal article" date="1999" name="DNA Res.">
        <title>Prediction of the coding sequences of unidentified human genes. XV. The complete sequences of 100 new cDNA clones from brain which code for large proteins in vitro.</title>
        <authorList>
            <person name="Nagase T."/>
            <person name="Ishikawa K."/>
            <person name="Kikuno R."/>
            <person name="Hirosawa M."/>
            <person name="Nomura N."/>
            <person name="Ohara O."/>
        </authorList>
    </citation>
    <scope>NUCLEOTIDE SEQUENCE [LARGE SCALE MRNA] OF 24-861 (ISOFORM 1)</scope>
    <source>
        <tissue>Brain</tissue>
    </source>
</reference>
<comment type="interaction">
    <interactant intactId="EBI-310660">
        <id>Q9ULK2</id>
    </interactant>
    <interactant intactId="EBI-948001">
        <id>Q15323</id>
        <label>KRT31</label>
    </interactant>
    <organismsDiffer>false</organismsDiffer>
    <experiments>3</experiments>
</comment>
<comment type="interaction">
    <interactant intactId="EBI-310660">
        <id>Q9ULK2</id>
    </interactant>
    <interactant intactId="EBI-10172052">
        <id>P60411</id>
        <label>KRTAP10-9</label>
    </interactant>
    <organismsDiffer>false</organismsDiffer>
    <experiments>3</experiments>
</comment>
<comment type="interaction">
    <interactant intactId="EBI-310660">
        <id>Q9ULK2</id>
    </interactant>
    <interactant intactId="EBI-530034">
        <id>O43189</id>
        <label>PHF1</label>
    </interactant>
    <organismsDiffer>false</organismsDiffer>
    <experiments>3</experiments>
</comment>
<comment type="interaction">
    <interactant intactId="EBI-21568482">
        <id>Q9ULK2-2</id>
    </interactant>
    <interactant intactId="EBI-348399">
        <id>P22607</id>
        <label>FGFR3</label>
    </interactant>
    <organismsDiffer>false</organismsDiffer>
    <experiments>3</experiments>
</comment>
<comment type="interaction">
    <interactant intactId="EBI-21568482">
        <id>Q9ULK2-2</id>
    </interactant>
    <interactant intactId="EBI-351506">
        <id>P06396</id>
        <label>GSN</label>
    </interactant>
    <organismsDiffer>false</organismsDiffer>
    <experiments>3</experiments>
</comment>
<comment type="interaction">
    <interactant intactId="EBI-21568482">
        <id>Q9ULK2-2</id>
    </interactant>
    <interactant intactId="EBI-5235340">
        <id>Q7Z699</id>
        <label>SPRED1</label>
    </interactant>
    <organismsDiffer>false</organismsDiffer>
    <experiments>3</experiments>
</comment>
<comment type="interaction">
    <interactant intactId="EBI-21568482">
        <id>Q9ULK2-2</id>
    </interactant>
    <interactant intactId="EBI-25900580">
        <id>Q9Y649</id>
    </interactant>
    <organismsDiffer>false</organismsDiffer>
    <experiments>3</experiments>
</comment>
<comment type="alternative products">
    <event type="alternative splicing"/>
    <isoform>
        <id>Q9ULK2-1</id>
        <name>1</name>
        <sequence type="displayed"/>
    </isoform>
    <isoform>
        <id>Q9ULK2-2</id>
        <name>2</name>
        <sequence type="described" ref="VSP_032351 VSP_032352"/>
    </isoform>
    <isoform>
        <id>Q9ULK2-3</id>
        <name>3</name>
        <sequence type="described" ref="VSP_041344 VSP_041345"/>
    </isoform>
</comment>
<comment type="sequence caution" evidence="5">
    <conflict type="erroneous initiation">
        <sequence resource="EMBL-CDS" id="BAA86532"/>
    </conflict>
    <text>Truncated N-terminus.</text>
</comment>
<comment type="sequence caution" evidence="5">
    <conflict type="miscellaneous discrepancy">
        <sequence resource="EMBL-CDS" id="BAA86532"/>
    </conflict>
    <text>Contaminating sequence. Sequence of unknown origin in the N-terminal part.</text>
</comment>
<organism>
    <name type="scientific">Homo sapiens</name>
    <name type="common">Human</name>
    <dbReference type="NCBI Taxonomy" id="9606"/>
    <lineage>
        <taxon>Eukaryota</taxon>
        <taxon>Metazoa</taxon>
        <taxon>Chordata</taxon>
        <taxon>Craniata</taxon>
        <taxon>Vertebrata</taxon>
        <taxon>Euteleostomi</taxon>
        <taxon>Mammalia</taxon>
        <taxon>Eutheria</taxon>
        <taxon>Euarchontoglires</taxon>
        <taxon>Primates</taxon>
        <taxon>Haplorrhini</taxon>
        <taxon>Catarrhini</taxon>
        <taxon>Hominidae</taxon>
        <taxon>Homo</taxon>
    </lineage>
</organism>
<gene>
    <name type="primary">ATXN7L1</name>
    <name type="synonym">ATXN7L4</name>
    <name type="synonym">KIAA1218</name>
</gene>
<protein>
    <recommendedName>
        <fullName>Ataxin-7-like protein 1</fullName>
    </recommendedName>
    <alternativeName>
        <fullName>Ataxin-7-like protein 4</fullName>
    </alternativeName>
</protein>
<proteinExistence type="evidence at protein level"/>
<name>AT7L1_HUMAN</name>